<gene>
    <name type="primary">FBL9</name>
    <name type="ordered locus">At4g05497</name>
    <name type="ORF">T1J24.1</name>
</gene>
<evidence type="ECO:0000255" key="1">
    <source>
        <dbReference type="PROSITE-ProRule" id="PRU00080"/>
    </source>
</evidence>
<keyword id="KW-1185">Reference proteome</keyword>
<accession>Q9S9V8</accession>
<feature type="chain" id="PRO_0000272250" description="Putative F-box/LRR-repeat protein 9">
    <location>
        <begin position="1"/>
        <end position="246"/>
    </location>
</feature>
<feature type="domain" description="F-box" evidence="1">
    <location>
        <begin position="18"/>
        <end position="65"/>
    </location>
</feature>
<sequence length="246" mass="27438">MSSSSSSPFPQAMKNGEYRNWAELPPELTSSILLRLGAIEILQNAQRVCKSWRRVCQDPSMWRKIDIRIKENLVNSVELFYVIEPLCCRAVDLSQGGLLEINIDYLVNTSFLNYIADRSSNLRRLGVVDCAPVLSRGVVEAAMKLPLLEELDITYKSSIREQELKVVGQSCPNLRTLKLNCTGDVKCCDKVALAIAETMPGLRHLQLFRNGLSETGLNAILEGCPHLKNLGLHQCLNINIVGDIVK</sequence>
<reference key="1">
    <citation type="journal article" date="1999" name="Nature">
        <title>Sequence and analysis of chromosome 4 of the plant Arabidopsis thaliana.</title>
        <authorList>
            <person name="Mayer K.F.X."/>
            <person name="Schueller C."/>
            <person name="Wambutt R."/>
            <person name="Murphy G."/>
            <person name="Volckaert G."/>
            <person name="Pohl T."/>
            <person name="Duesterhoeft A."/>
            <person name="Stiekema W."/>
            <person name="Entian K.-D."/>
            <person name="Terryn N."/>
            <person name="Harris B."/>
            <person name="Ansorge W."/>
            <person name="Brandt P."/>
            <person name="Grivell L.A."/>
            <person name="Rieger M."/>
            <person name="Weichselgartner M."/>
            <person name="de Simone V."/>
            <person name="Obermaier B."/>
            <person name="Mache R."/>
            <person name="Mueller M."/>
            <person name="Kreis M."/>
            <person name="Delseny M."/>
            <person name="Puigdomenech P."/>
            <person name="Watson M."/>
            <person name="Schmidtheini T."/>
            <person name="Reichert B."/>
            <person name="Portetelle D."/>
            <person name="Perez-Alonso M."/>
            <person name="Boutry M."/>
            <person name="Bancroft I."/>
            <person name="Vos P."/>
            <person name="Hoheisel J."/>
            <person name="Zimmermann W."/>
            <person name="Wedler H."/>
            <person name="Ridley P."/>
            <person name="Langham S.-A."/>
            <person name="McCullagh B."/>
            <person name="Bilham L."/>
            <person name="Robben J."/>
            <person name="van der Schueren J."/>
            <person name="Grymonprez B."/>
            <person name="Chuang Y.-J."/>
            <person name="Vandenbussche F."/>
            <person name="Braeken M."/>
            <person name="Weltjens I."/>
            <person name="Voet M."/>
            <person name="Bastiaens I."/>
            <person name="Aert R."/>
            <person name="Defoor E."/>
            <person name="Weitzenegger T."/>
            <person name="Bothe G."/>
            <person name="Ramsperger U."/>
            <person name="Hilbert H."/>
            <person name="Braun M."/>
            <person name="Holzer E."/>
            <person name="Brandt A."/>
            <person name="Peters S."/>
            <person name="van Staveren M."/>
            <person name="Dirkse W."/>
            <person name="Mooijman P."/>
            <person name="Klein Lankhorst R."/>
            <person name="Rose M."/>
            <person name="Hauf J."/>
            <person name="Koetter P."/>
            <person name="Berneiser S."/>
            <person name="Hempel S."/>
            <person name="Feldpausch M."/>
            <person name="Lamberth S."/>
            <person name="Van den Daele H."/>
            <person name="De Keyser A."/>
            <person name="Buysshaert C."/>
            <person name="Gielen J."/>
            <person name="Villarroel R."/>
            <person name="De Clercq R."/>
            <person name="van Montagu M."/>
            <person name="Rogers J."/>
            <person name="Cronin A."/>
            <person name="Quail M.A."/>
            <person name="Bray-Allen S."/>
            <person name="Clark L."/>
            <person name="Doggett J."/>
            <person name="Hall S."/>
            <person name="Kay M."/>
            <person name="Lennard N."/>
            <person name="McLay K."/>
            <person name="Mayes R."/>
            <person name="Pettett A."/>
            <person name="Rajandream M.A."/>
            <person name="Lyne M."/>
            <person name="Benes V."/>
            <person name="Rechmann S."/>
            <person name="Borkova D."/>
            <person name="Bloecker H."/>
            <person name="Scharfe M."/>
            <person name="Grimm M."/>
            <person name="Loehnert T.-H."/>
            <person name="Dose S."/>
            <person name="de Haan M."/>
            <person name="Maarse A.C."/>
            <person name="Schaefer M."/>
            <person name="Mueller-Auer S."/>
            <person name="Gabel C."/>
            <person name="Fuchs M."/>
            <person name="Fartmann B."/>
            <person name="Granderath K."/>
            <person name="Dauner D."/>
            <person name="Herzl A."/>
            <person name="Neumann S."/>
            <person name="Argiriou A."/>
            <person name="Vitale D."/>
            <person name="Liguori R."/>
            <person name="Piravandi E."/>
            <person name="Massenet O."/>
            <person name="Quigley F."/>
            <person name="Clabauld G."/>
            <person name="Muendlein A."/>
            <person name="Felber R."/>
            <person name="Schnabl S."/>
            <person name="Hiller R."/>
            <person name="Schmidt W."/>
            <person name="Lecharny A."/>
            <person name="Aubourg S."/>
            <person name="Chefdor F."/>
            <person name="Cooke R."/>
            <person name="Berger C."/>
            <person name="Monfort A."/>
            <person name="Casacuberta E."/>
            <person name="Gibbons T."/>
            <person name="Weber N."/>
            <person name="Vandenbol M."/>
            <person name="Bargues M."/>
            <person name="Terol J."/>
            <person name="Torres A."/>
            <person name="Perez-Perez A."/>
            <person name="Purnelle B."/>
            <person name="Bent E."/>
            <person name="Johnson S."/>
            <person name="Tacon D."/>
            <person name="Jesse T."/>
            <person name="Heijnen L."/>
            <person name="Schwarz S."/>
            <person name="Scholler P."/>
            <person name="Heber S."/>
            <person name="Francs P."/>
            <person name="Bielke C."/>
            <person name="Frishman D."/>
            <person name="Haase D."/>
            <person name="Lemcke K."/>
            <person name="Mewes H.-W."/>
            <person name="Stocker S."/>
            <person name="Zaccaria P."/>
            <person name="Bevan M."/>
            <person name="Wilson R.K."/>
            <person name="de la Bastide M."/>
            <person name="Habermann K."/>
            <person name="Parnell L."/>
            <person name="Dedhia N."/>
            <person name="Gnoj L."/>
            <person name="Schutz K."/>
            <person name="Huang E."/>
            <person name="Spiegel L."/>
            <person name="Sekhon M."/>
            <person name="Murray J."/>
            <person name="Sheet P."/>
            <person name="Cordes M."/>
            <person name="Abu-Threideh J."/>
            <person name="Stoneking T."/>
            <person name="Kalicki J."/>
            <person name="Graves T."/>
            <person name="Harmon G."/>
            <person name="Edwards J."/>
            <person name="Latreille P."/>
            <person name="Courtney L."/>
            <person name="Cloud J."/>
            <person name="Abbott A."/>
            <person name="Scott K."/>
            <person name="Johnson D."/>
            <person name="Minx P."/>
            <person name="Bentley D."/>
            <person name="Fulton B."/>
            <person name="Miller N."/>
            <person name="Greco T."/>
            <person name="Kemp K."/>
            <person name="Kramer J."/>
            <person name="Fulton L."/>
            <person name="Mardis E."/>
            <person name="Dante M."/>
            <person name="Pepin K."/>
            <person name="Hillier L.W."/>
            <person name="Nelson J."/>
            <person name="Spieth J."/>
            <person name="Ryan E."/>
            <person name="Andrews S."/>
            <person name="Geisel C."/>
            <person name="Layman D."/>
            <person name="Du H."/>
            <person name="Ali J."/>
            <person name="Berghoff A."/>
            <person name="Jones K."/>
            <person name="Drone K."/>
            <person name="Cotton M."/>
            <person name="Joshu C."/>
            <person name="Antonoiu B."/>
            <person name="Zidanic M."/>
            <person name="Strong C."/>
            <person name="Sun H."/>
            <person name="Lamar B."/>
            <person name="Yordan C."/>
            <person name="Ma P."/>
            <person name="Zhong J."/>
            <person name="Preston R."/>
            <person name="Vil D."/>
            <person name="Shekher M."/>
            <person name="Matero A."/>
            <person name="Shah R."/>
            <person name="Swaby I.K."/>
            <person name="O'Shaughnessy A."/>
            <person name="Rodriguez M."/>
            <person name="Hoffman J."/>
            <person name="Till S."/>
            <person name="Granat S."/>
            <person name="Shohdy N."/>
            <person name="Hasegawa A."/>
            <person name="Hameed A."/>
            <person name="Lodhi M."/>
            <person name="Johnson A."/>
            <person name="Chen E."/>
            <person name="Marra M.A."/>
            <person name="Martienssen R."/>
            <person name="McCombie W.R."/>
        </authorList>
    </citation>
    <scope>NUCLEOTIDE SEQUENCE [LARGE SCALE GENOMIC DNA]</scope>
    <source>
        <strain>cv. Columbia</strain>
    </source>
</reference>
<reference key="2">
    <citation type="journal article" date="2017" name="Plant J.">
        <title>Araport11: a complete reannotation of the Arabidopsis thaliana reference genome.</title>
        <authorList>
            <person name="Cheng C.Y."/>
            <person name="Krishnakumar V."/>
            <person name="Chan A.P."/>
            <person name="Thibaud-Nissen F."/>
            <person name="Schobel S."/>
            <person name="Town C.D."/>
        </authorList>
    </citation>
    <scope>GENOME REANNOTATION</scope>
    <source>
        <strain>cv. Columbia</strain>
    </source>
</reference>
<reference key="3">
    <citation type="journal article" date="2000" name="Trends Plant Sci.">
        <title>F-box proteins in Arabidopsis.</title>
        <authorList>
            <person name="Xiao W."/>
            <person name="Jang J.-C."/>
        </authorList>
    </citation>
    <scope>GENE FAMILY</scope>
    <scope>NOMENCLATURE</scope>
</reference>
<proteinExistence type="predicted"/>
<dbReference type="EMBL" id="AF147263">
    <property type="protein sequence ID" value="AAD48964.1"/>
    <property type="molecule type" value="Genomic_DNA"/>
</dbReference>
<dbReference type="EMBL" id="CP002687">
    <property type="protein sequence ID" value="AEE82528.1"/>
    <property type="molecule type" value="Genomic_DNA"/>
</dbReference>
<dbReference type="RefSeq" id="NP_849530.1">
    <property type="nucleotide sequence ID" value="NM_179199.2"/>
</dbReference>
<dbReference type="SMR" id="Q9S9V8"/>
<dbReference type="FunCoup" id="Q9S9V8">
    <property type="interactions" value="510"/>
</dbReference>
<dbReference type="STRING" id="3702.Q9S9V8"/>
<dbReference type="PaxDb" id="3702-AT4G05497.1"/>
<dbReference type="EnsemblPlants" id="AT4G05497.1">
    <property type="protein sequence ID" value="AT4G05497.1"/>
    <property type="gene ID" value="AT4G05497"/>
</dbReference>
<dbReference type="GeneID" id="830176"/>
<dbReference type="Gramene" id="AT4G05497.1">
    <property type="protein sequence ID" value="AT4G05497.1"/>
    <property type="gene ID" value="AT4G05497"/>
</dbReference>
<dbReference type="KEGG" id="ath:AT4G05497"/>
<dbReference type="Araport" id="AT4G05497"/>
<dbReference type="TAIR" id="AT4G05497"/>
<dbReference type="eggNOG" id="KOG1947">
    <property type="taxonomic scope" value="Eukaryota"/>
</dbReference>
<dbReference type="HOGENOM" id="CLU_044915_0_0_1"/>
<dbReference type="InParanoid" id="Q9S9V8"/>
<dbReference type="OMA" id="MWRKIDI"/>
<dbReference type="PhylomeDB" id="Q9S9V8"/>
<dbReference type="PRO" id="PR:Q9S9V8"/>
<dbReference type="Proteomes" id="UP000006548">
    <property type="component" value="Chromosome 4"/>
</dbReference>
<dbReference type="ExpressionAtlas" id="Q9S9V8">
    <property type="expression patterns" value="baseline and differential"/>
</dbReference>
<dbReference type="CDD" id="cd22164">
    <property type="entry name" value="F-box_AtSKIP19-like"/>
    <property type="match status" value="1"/>
</dbReference>
<dbReference type="Gene3D" id="1.20.1280.50">
    <property type="match status" value="1"/>
</dbReference>
<dbReference type="Gene3D" id="3.80.10.10">
    <property type="entry name" value="Ribonuclease Inhibitor"/>
    <property type="match status" value="1"/>
</dbReference>
<dbReference type="InterPro" id="IPR001810">
    <property type="entry name" value="F-box_dom"/>
</dbReference>
<dbReference type="InterPro" id="IPR032675">
    <property type="entry name" value="LRR_dom_sf"/>
</dbReference>
<dbReference type="PANTHER" id="PTHR38926">
    <property type="entry name" value="F-BOX DOMAIN CONTAINING PROTEIN, EXPRESSED"/>
    <property type="match status" value="1"/>
</dbReference>
<dbReference type="PANTHER" id="PTHR38926:SF2">
    <property type="entry name" value="F-BOX_LRR-REPEAT PROTEIN 21-RELATED"/>
    <property type="match status" value="1"/>
</dbReference>
<dbReference type="Pfam" id="PF12937">
    <property type="entry name" value="F-box-like"/>
    <property type="match status" value="1"/>
</dbReference>
<dbReference type="SMART" id="SM00256">
    <property type="entry name" value="FBOX"/>
    <property type="match status" value="1"/>
</dbReference>
<dbReference type="SUPFAM" id="SSF52047">
    <property type="entry name" value="RNI-like"/>
    <property type="match status" value="1"/>
</dbReference>
<dbReference type="PROSITE" id="PS50181">
    <property type="entry name" value="FBOX"/>
    <property type="match status" value="1"/>
</dbReference>
<name>FBL9_ARATH</name>
<protein>
    <recommendedName>
        <fullName>Putative F-box/LRR-repeat protein 9</fullName>
    </recommendedName>
</protein>
<organism>
    <name type="scientific">Arabidopsis thaliana</name>
    <name type="common">Mouse-ear cress</name>
    <dbReference type="NCBI Taxonomy" id="3702"/>
    <lineage>
        <taxon>Eukaryota</taxon>
        <taxon>Viridiplantae</taxon>
        <taxon>Streptophyta</taxon>
        <taxon>Embryophyta</taxon>
        <taxon>Tracheophyta</taxon>
        <taxon>Spermatophyta</taxon>
        <taxon>Magnoliopsida</taxon>
        <taxon>eudicotyledons</taxon>
        <taxon>Gunneridae</taxon>
        <taxon>Pentapetalae</taxon>
        <taxon>rosids</taxon>
        <taxon>malvids</taxon>
        <taxon>Brassicales</taxon>
        <taxon>Brassicaceae</taxon>
        <taxon>Camelineae</taxon>
        <taxon>Arabidopsis</taxon>
    </lineage>
</organism>